<gene>
    <name type="primary">Skint11</name>
</gene>
<reference key="1">
    <citation type="submission" date="2007-08" db="EMBL/GenBank/DDBJ databases">
        <title>A new family of genes on mouse chromosome 4.</title>
        <authorList>
            <person name="Boyden L.M."/>
            <person name="Lifton R.P."/>
        </authorList>
    </citation>
    <scope>NUCLEOTIDE SEQUENCE [MRNA]</scope>
    <source>
        <strain>C57BL/6J</strain>
    </source>
</reference>
<keyword id="KW-1015">Disulfide bond</keyword>
<keyword id="KW-0393">Immunoglobulin domain</keyword>
<keyword id="KW-0472">Membrane</keyword>
<keyword id="KW-1185">Reference proteome</keyword>
<keyword id="KW-0732">Signal</keyword>
<keyword id="KW-0812">Transmembrane</keyword>
<keyword id="KW-1133">Transmembrane helix</keyword>
<organism>
    <name type="scientific">Mus musculus</name>
    <name type="common">Mouse</name>
    <dbReference type="NCBI Taxonomy" id="10090"/>
    <lineage>
        <taxon>Eukaryota</taxon>
        <taxon>Metazoa</taxon>
        <taxon>Chordata</taxon>
        <taxon>Craniata</taxon>
        <taxon>Vertebrata</taxon>
        <taxon>Euteleostomi</taxon>
        <taxon>Mammalia</taxon>
        <taxon>Eutheria</taxon>
        <taxon>Euarchontoglires</taxon>
        <taxon>Glires</taxon>
        <taxon>Rodentia</taxon>
        <taxon>Myomorpha</taxon>
        <taxon>Muroidea</taxon>
        <taxon>Muridae</taxon>
        <taxon>Murinae</taxon>
        <taxon>Mus</taxon>
        <taxon>Mus</taxon>
    </lineage>
</organism>
<evidence type="ECO:0000250" key="1"/>
<evidence type="ECO:0000255" key="2"/>
<evidence type="ECO:0000255" key="3">
    <source>
        <dbReference type="PROSITE-ProRule" id="PRU00114"/>
    </source>
</evidence>
<evidence type="ECO:0000305" key="4"/>
<accession>A7XV14</accession>
<name>SKI11_MOUSE</name>
<protein>
    <recommendedName>
        <fullName>Selection and upkeep of intraepithelial T-cells protein 11</fullName>
        <shortName>Skint-11</shortName>
    </recommendedName>
</protein>
<feature type="signal peptide" evidence="2">
    <location>
        <begin position="1"/>
        <end position="28"/>
    </location>
</feature>
<feature type="chain" id="PRO_5000271645" description="Selection and upkeep of intraepithelial T-cells protein 11">
    <location>
        <begin position="29"/>
        <end position="364"/>
    </location>
</feature>
<feature type="topological domain" description="Extracellular" evidence="2">
    <location>
        <begin position="29"/>
        <end position="138"/>
    </location>
</feature>
<feature type="transmembrane region" description="Helical" evidence="2">
    <location>
        <begin position="139"/>
        <end position="159"/>
    </location>
</feature>
<feature type="topological domain" description="Cytoplasmic" evidence="2">
    <location>
        <begin position="160"/>
        <end position="186"/>
    </location>
</feature>
<feature type="transmembrane region" description="Helical" evidence="2">
    <location>
        <begin position="187"/>
        <end position="207"/>
    </location>
</feature>
<feature type="topological domain" description="Extracellular" evidence="2">
    <location>
        <begin position="208"/>
        <end position="230"/>
    </location>
</feature>
<feature type="transmembrane region" description="Helical" evidence="2">
    <location>
        <begin position="231"/>
        <end position="251"/>
    </location>
</feature>
<feature type="topological domain" description="Cytoplasmic" evidence="2">
    <location>
        <begin position="252"/>
        <end position="364"/>
    </location>
</feature>
<feature type="domain" description="Ig-like V-type">
    <location>
        <begin position="29"/>
        <end position="118"/>
    </location>
</feature>
<feature type="disulfide bond" evidence="3">
    <location>
        <begin position="48"/>
        <end position="102"/>
    </location>
</feature>
<dbReference type="EMBL" id="EU099309">
    <property type="protein sequence ID" value="ABU87907.1"/>
    <property type="molecule type" value="mRNA"/>
</dbReference>
<dbReference type="CCDS" id="CCDS51270.1"/>
<dbReference type="RefSeq" id="NP_001159499.1">
    <property type="nucleotide sequence ID" value="NM_001166027.1"/>
</dbReference>
<dbReference type="SMR" id="A7XV14"/>
<dbReference type="FunCoup" id="A7XV14">
    <property type="interactions" value="11"/>
</dbReference>
<dbReference type="GlyGen" id="A7XV14">
    <property type="glycosylation" value="2 sites, 2 N-linked glycans (2 sites)"/>
</dbReference>
<dbReference type="DNASU" id="230623"/>
<dbReference type="Ensembl" id="ENSMUST00000164297.8">
    <property type="protein sequence ID" value="ENSMUSP00000127138.2"/>
    <property type="gene ID" value="ENSMUSG00000057977.11"/>
</dbReference>
<dbReference type="GeneID" id="230623"/>
<dbReference type="KEGG" id="mmu:230623"/>
<dbReference type="UCSC" id="uc012div.1">
    <property type="organism name" value="mouse"/>
</dbReference>
<dbReference type="AGR" id="MGI:2685415"/>
<dbReference type="CTD" id="230623"/>
<dbReference type="MGI" id="MGI:2685415">
    <property type="gene designation" value="Skint11"/>
</dbReference>
<dbReference type="VEuPathDB" id="HostDB:ENSMUSG00000057977"/>
<dbReference type="GeneTree" id="ENSGT00940000165990"/>
<dbReference type="HOGENOM" id="CLU_871423_0_0_1"/>
<dbReference type="InParanoid" id="A7XV14"/>
<dbReference type="OrthoDB" id="9986391at2759"/>
<dbReference type="PhylomeDB" id="A7XV14"/>
<dbReference type="BioGRID-ORCS" id="230623">
    <property type="hits" value="1 hit in 76 CRISPR screens"/>
</dbReference>
<dbReference type="PRO" id="PR:A7XV14"/>
<dbReference type="Proteomes" id="UP000000589">
    <property type="component" value="Chromosome 4"/>
</dbReference>
<dbReference type="RNAct" id="A7XV14">
    <property type="molecule type" value="protein"/>
</dbReference>
<dbReference type="Bgee" id="ENSMUSG00000057977">
    <property type="expression patterns" value="Expressed in zone of skin and 6 other cell types or tissues"/>
</dbReference>
<dbReference type="ExpressionAtlas" id="A7XV14">
    <property type="expression patterns" value="baseline and differential"/>
</dbReference>
<dbReference type="GO" id="GO:0016020">
    <property type="term" value="C:membrane"/>
    <property type="evidence" value="ECO:0007669"/>
    <property type="project" value="UniProtKB-SubCell"/>
</dbReference>
<dbReference type="FunFam" id="2.60.40.10:FF:000088">
    <property type="entry name" value="Butyrophilin subfamily 1 member A1"/>
    <property type="match status" value="1"/>
</dbReference>
<dbReference type="Gene3D" id="2.60.40.10">
    <property type="entry name" value="Immunoglobulins"/>
    <property type="match status" value="1"/>
</dbReference>
<dbReference type="InterPro" id="IPR053896">
    <property type="entry name" value="BTN3A2-like_Ig-C"/>
</dbReference>
<dbReference type="InterPro" id="IPR007110">
    <property type="entry name" value="Ig-like_dom"/>
</dbReference>
<dbReference type="InterPro" id="IPR036179">
    <property type="entry name" value="Ig-like_dom_sf"/>
</dbReference>
<dbReference type="InterPro" id="IPR013783">
    <property type="entry name" value="Ig-like_fold"/>
</dbReference>
<dbReference type="InterPro" id="IPR050504">
    <property type="entry name" value="IgSF_BTN/MOG"/>
</dbReference>
<dbReference type="PANTHER" id="PTHR24100">
    <property type="entry name" value="BUTYROPHILIN"/>
    <property type="match status" value="1"/>
</dbReference>
<dbReference type="PANTHER" id="PTHR24100:SF148">
    <property type="entry name" value="SELECTION AND UPKEEP OF INTRAEPITHELIAL T-CELLS PROTEIN 10-RELATED"/>
    <property type="match status" value="1"/>
</dbReference>
<dbReference type="Pfam" id="PF22705">
    <property type="entry name" value="C2-set_3"/>
    <property type="match status" value="1"/>
</dbReference>
<dbReference type="SUPFAM" id="SSF48726">
    <property type="entry name" value="Immunoglobulin"/>
    <property type="match status" value="1"/>
</dbReference>
<dbReference type="PROSITE" id="PS50835">
    <property type="entry name" value="IG_LIKE"/>
    <property type="match status" value="1"/>
</dbReference>
<proteinExistence type="evidence at transcript level"/>
<sequence length="364" mass="42262">MEPSASCLPGFFMVCILLKITVLTQVMSLDIQINTQIPDTEEGVLVECTAESLFPPAEMTWRDSKGNIIPPSSTFDSQDRAGLLCLKSTILLKNRTEGPITCSIYNKTTNQEKRRSIILSDVLFRPQYMSLMSNNLLYLGIYLIFILFLNFLKGILFCLTKRLVHFRKRMIKIKKVWSNKTRACCPLIWEFLEIVLFIAFLPLYLMFRIRVFTLDEAHILYNNWLWKVCKTLIAMMILFTVLILFLLWTLNRYGKMPCLSSMNIDVSTHDAEQNSSKSAKFQENYDVAGQMILETYEETIFCQHQESCEEYNYDPLLLSSLDALGTCEDEKFSQHQESFEEDEDLQSFSDFKIELYSKLGNLTH</sequence>
<comment type="function">
    <text evidence="1">May act by engaging a cell surface molecule on immature T-cells in the embryonic thymus.</text>
</comment>
<comment type="subcellular location">
    <subcellularLocation>
        <location evidence="4">Membrane</location>
        <topology evidence="4">Multi-pass membrane protein</topology>
    </subcellularLocation>
</comment>
<comment type="tissue specificity">
    <text>Expressed in skin and thymus.</text>
</comment>
<comment type="miscellaneous">
    <text>Encoded by one of the 11 copies of Skint genes clustered in the D1 region of the chromosome 4.</text>
</comment>
<comment type="similarity">
    <text evidence="4">Belongs to the SKINT family.</text>
</comment>